<proteinExistence type="inferred from homology"/>
<feature type="chain" id="PRO_0000185000" description="5-oxoprolinase subunit A">
    <location>
        <begin position="1"/>
        <end position="255"/>
    </location>
</feature>
<gene>
    <name evidence="1" type="primary">pxpA</name>
    <name type="ordered locus">Cj1541</name>
</gene>
<reference key="1">
    <citation type="journal article" date="2000" name="Nature">
        <title>The genome sequence of the food-borne pathogen Campylobacter jejuni reveals hypervariable sequences.</title>
        <authorList>
            <person name="Parkhill J."/>
            <person name="Wren B.W."/>
            <person name="Mungall K.L."/>
            <person name="Ketley J.M."/>
            <person name="Churcher C.M."/>
            <person name="Basham D."/>
            <person name="Chillingworth T."/>
            <person name="Davies R.M."/>
            <person name="Feltwell T."/>
            <person name="Holroyd S."/>
            <person name="Jagels K."/>
            <person name="Karlyshev A.V."/>
            <person name="Moule S."/>
            <person name="Pallen M.J."/>
            <person name="Penn C.W."/>
            <person name="Quail M.A."/>
            <person name="Rajandream M.A."/>
            <person name="Rutherford K.M."/>
            <person name="van Vliet A.H.M."/>
            <person name="Whitehead S."/>
            <person name="Barrell B.G."/>
        </authorList>
    </citation>
    <scope>NUCLEOTIDE SEQUENCE [LARGE SCALE GENOMIC DNA]</scope>
    <source>
        <strain>ATCC 700819 / NCTC 11168</strain>
    </source>
</reference>
<keyword id="KW-0067">ATP-binding</keyword>
<keyword id="KW-0378">Hydrolase</keyword>
<keyword id="KW-0547">Nucleotide-binding</keyword>
<keyword id="KW-1185">Reference proteome</keyword>
<accession>Q9PMC8</accession>
<accession>Q0P884</accession>
<organism>
    <name type="scientific">Campylobacter jejuni subsp. jejuni serotype O:2 (strain ATCC 700819 / NCTC 11168)</name>
    <dbReference type="NCBI Taxonomy" id="192222"/>
    <lineage>
        <taxon>Bacteria</taxon>
        <taxon>Pseudomonadati</taxon>
        <taxon>Campylobacterota</taxon>
        <taxon>Epsilonproteobacteria</taxon>
        <taxon>Campylobacterales</taxon>
        <taxon>Campylobacteraceae</taxon>
        <taxon>Campylobacter</taxon>
    </lineage>
</organism>
<protein>
    <recommendedName>
        <fullName evidence="1">5-oxoprolinase subunit A</fullName>
        <shortName evidence="1">5-OPase subunit A</shortName>
        <ecNumber evidence="1">3.5.2.9</ecNumber>
    </recommendedName>
    <alternativeName>
        <fullName evidence="1">5-oxoprolinase (ATP-hydrolyzing) subunit A</fullName>
    </alternativeName>
</protein>
<evidence type="ECO:0000255" key="1">
    <source>
        <dbReference type="HAMAP-Rule" id="MF_00691"/>
    </source>
</evidence>
<sequence length="255" mass="28084">MFKVDLNSDLGESFGAYKMGMDEEILKFVSSVNVACGFHAGDPCVMDETLNLAKQNGVCIGAHPSYPDLLGFGRRNMQISFEEAKNYALYQLGALFGFAKAKGMKIQHFKAHGALYNMAAIDENLALALCEAVASFDENIIFLGLSNSAMNEAAKKKGLRYANEVFADRAYNDDGTLVSRKLEGALIHDENLAIKRVIKMIKESKVTSINGKEIDLKADSICVHGDNAKALEFVKKIKENLKKEQIQICALENFI</sequence>
<name>PXPA_CAMJE</name>
<comment type="function">
    <text evidence="1">Catalyzes the cleavage of 5-oxoproline to form L-glutamate coupled to the hydrolysis of ATP to ADP and inorganic phosphate.</text>
</comment>
<comment type="catalytic activity">
    <reaction evidence="1">
        <text>5-oxo-L-proline + ATP + 2 H2O = L-glutamate + ADP + phosphate + H(+)</text>
        <dbReference type="Rhea" id="RHEA:10348"/>
        <dbReference type="ChEBI" id="CHEBI:15377"/>
        <dbReference type="ChEBI" id="CHEBI:15378"/>
        <dbReference type="ChEBI" id="CHEBI:29985"/>
        <dbReference type="ChEBI" id="CHEBI:30616"/>
        <dbReference type="ChEBI" id="CHEBI:43474"/>
        <dbReference type="ChEBI" id="CHEBI:58402"/>
        <dbReference type="ChEBI" id="CHEBI:456216"/>
        <dbReference type="EC" id="3.5.2.9"/>
    </reaction>
</comment>
<comment type="subunit">
    <text evidence="1">Forms a complex composed of PxpA, PxpB and PxpC.</text>
</comment>
<comment type="similarity">
    <text evidence="1">Belongs to the LamB/PxpA family.</text>
</comment>
<dbReference type="EC" id="3.5.2.9" evidence="1"/>
<dbReference type="EMBL" id="AL111168">
    <property type="protein sequence ID" value="CAL35641.1"/>
    <property type="molecule type" value="Genomic_DNA"/>
</dbReference>
<dbReference type="PIR" id="C81301">
    <property type="entry name" value="C81301"/>
</dbReference>
<dbReference type="RefSeq" id="WP_002851457.1">
    <property type="nucleotide sequence ID" value="NZ_SZUC01000003.1"/>
</dbReference>
<dbReference type="RefSeq" id="YP_002344913.1">
    <property type="nucleotide sequence ID" value="NC_002163.1"/>
</dbReference>
<dbReference type="SMR" id="Q9PMC8"/>
<dbReference type="IntAct" id="Q9PMC8">
    <property type="interactions" value="6"/>
</dbReference>
<dbReference type="STRING" id="192222.Cj1541"/>
<dbReference type="PaxDb" id="192222-Cj1541"/>
<dbReference type="EnsemblBacteria" id="CAL35641">
    <property type="protein sequence ID" value="CAL35641"/>
    <property type="gene ID" value="Cj1541"/>
</dbReference>
<dbReference type="GeneID" id="905823"/>
<dbReference type="KEGG" id="cje:Cj1541"/>
<dbReference type="PATRIC" id="fig|192222.6.peg.1518"/>
<dbReference type="eggNOG" id="COG1540">
    <property type="taxonomic scope" value="Bacteria"/>
</dbReference>
<dbReference type="HOGENOM" id="CLU_069535_0_0_7"/>
<dbReference type="OrthoDB" id="9773478at2"/>
<dbReference type="Proteomes" id="UP000000799">
    <property type="component" value="Chromosome"/>
</dbReference>
<dbReference type="GO" id="GO:0017168">
    <property type="term" value="F:5-oxoprolinase (ATP-hydrolyzing) activity"/>
    <property type="evidence" value="ECO:0007669"/>
    <property type="project" value="UniProtKB-UniRule"/>
</dbReference>
<dbReference type="GO" id="GO:0005524">
    <property type="term" value="F:ATP binding"/>
    <property type="evidence" value="ECO:0007669"/>
    <property type="project" value="UniProtKB-UniRule"/>
</dbReference>
<dbReference type="GO" id="GO:0005975">
    <property type="term" value="P:carbohydrate metabolic process"/>
    <property type="evidence" value="ECO:0007669"/>
    <property type="project" value="InterPro"/>
</dbReference>
<dbReference type="CDD" id="cd10787">
    <property type="entry name" value="LamB_YcsF_like"/>
    <property type="match status" value="1"/>
</dbReference>
<dbReference type="Gene3D" id="3.20.20.370">
    <property type="entry name" value="Glycoside hydrolase/deacetylase"/>
    <property type="match status" value="1"/>
</dbReference>
<dbReference type="HAMAP" id="MF_00691">
    <property type="entry name" value="PxpA"/>
    <property type="match status" value="1"/>
</dbReference>
<dbReference type="InterPro" id="IPR011330">
    <property type="entry name" value="Glyco_hydro/deAcase_b/a-brl"/>
</dbReference>
<dbReference type="InterPro" id="IPR005501">
    <property type="entry name" value="LamB/YcsF/PxpA-like"/>
</dbReference>
<dbReference type="NCBIfam" id="NF003814">
    <property type="entry name" value="PRK05406.1-3"/>
    <property type="match status" value="1"/>
</dbReference>
<dbReference type="NCBIfam" id="NF003816">
    <property type="entry name" value="PRK05406.1-5"/>
    <property type="match status" value="1"/>
</dbReference>
<dbReference type="PANTHER" id="PTHR30292:SF0">
    <property type="entry name" value="5-OXOPROLINASE SUBUNIT A"/>
    <property type="match status" value="1"/>
</dbReference>
<dbReference type="PANTHER" id="PTHR30292">
    <property type="entry name" value="UNCHARACTERIZED PROTEIN YBGL-RELATED"/>
    <property type="match status" value="1"/>
</dbReference>
<dbReference type="Pfam" id="PF03746">
    <property type="entry name" value="LamB_YcsF"/>
    <property type="match status" value="1"/>
</dbReference>
<dbReference type="SUPFAM" id="SSF88713">
    <property type="entry name" value="Glycoside hydrolase/deacetylase"/>
    <property type="match status" value="1"/>
</dbReference>